<dbReference type="EC" id="1.2.1.70" evidence="1"/>
<dbReference type="EMBL" id="CP000117">
    <property type="protein sequence ID" value="ABA23304.1"/>
    <property type="molecule type" value="Genomic_DNA"/>
</dbReference>
<dbReference type="SMR" id="Q3M6T2"/>
<dbReference type="STRING" id="240292.Ava_3699"/>
<dbReference type="KEGG" id="ava:Ava_3699"/>
<dbReference type="eggNOG" id="COG0373">
    <property type="taxonomic scope" value="Bacteria"/>
</dbReference>
<dbReference type="HOGENOM" id="CLU_035113_2_1_3"/>
<dbReference type="UniPathway" id="UPA00251">
    <property type="reaction ID" value="UER00316"/>
</dbReference>
<dbReference type="UniPathway" id="UPA00668"/>
<dbReference type="Proteomes" id="UP000002533">
    <property type="component" value="Chromosome"/>
</dbReference>
<dbReference type="GO" id="GO:0008883">
    <property type="term" value="F:glutamyl-tRNA reductase activity"/>
    <property type="evidence" value="ECO:0007669"/>
    <property type="project" value="UniProtKB-UniRule"/>
</dbReference>
<dbReference type="GO" id="GO:0050661">
    <property type="term" value="F:NADP binding"/>
    <property type="evidence" value="ECO:0007669"/>
    <property type="project" value="InterPro"/>
</dbReference>
<dbReference type="GO" id="GO:0015995">
    <property type="term" value="P:chlorophyll biosynthetic process"/>
    <property type="evidence" value="ECO:0007669"/>
    <property type="project" value="UniProtKB-UniRule"/>
</dbReference>
<dbReference type="GO" id="GO:0006782">
    <property type="term" value="P:protoporphyrinogen IX biosynthetic process"/>
    <property type="evidence" value="ECO:0007669"/>
    <property type="project" value="UniProtKB-UniRule"/>
</dbReference>
<dbReference type="CDD" id="cd05213">
    <property type="entry name" value="NAD_bind_Glutamyl_tRNA_reduct"/>
    <property type="match status" value="1"/>
</dbReference>
<dbReference type="FunFam" id="3.30.460.30:FF:000001">
    <property type="entry name" value="Glutamyl-tRNA reductase"/>
    <property type="match status" value="1"/>
</dbReference>
<dbReference type="FunFam" id="3.40.50.720:FF:000031">
    <property type="entry name" value="Glutamyl-tRNA reductase"/>
    <property type="match status" value="1"/>
</dbReference>
<dbReference type="Gene3D" id="3.30.460.30">
    <property type="entry name" value="Glutamyl-tRNA reductase, N-terminal domain"/>
    <property type="match status" value="1"/>
</dbReference>
<dbReference type="Gene3D" id="3.40.50.720">
    <property type="entry name" value="NAD(P)-binding Rossmann-like Domain"/>
    <property type="match status" value="1"/>
</dbReference>
<dbReference type="HAMAP" id="MF_00087">
    <property type="entry name" value="Glu_tRNA_reductase"/>
    <property type="match status" value="1"/>
</dbReference>
<dbReference type="InterPro" id="IPR000343">
    <property type="entry name" value="4pyrrol_synth_GluRdtase"/>
</dbReference>
<dbReference type="InterPro" id="IPR015896">
    <property type="entry name" value="4pyrrol_synth_GluRdtase_dimer"/>
</dbReference>
<dbReference type="InterPro" id="IPR015895">
    <property type="entry name" value="4pyrrol_synth_GluRdtase_N"/>
</dbReference>
<dbReference type="InterPro" id="IPR018214">
    <property type="entry name" value="GluRdtase_CS"/>
</dbReference>
<dbReference type="InterPro" id="IPR036453">
    <property type="entry name" value="GluRdtase_dimer_dom_sf"/>
</dbReference>
<dbReference type="InterPro" id="IPR036343">
    <property type="entry name" value="GluRdtase_N_sf"/>
</dbReference>
<dbReference type="InterPro" id="IPR036291">
    <property type="entry name" value="NAD(P)-bd_dom_sf"/>
</dbReference>
<dbReference type="InterPro" id="IPR006151">
    <property type="entry name" value="Shikm_DH/Glu-tRNA_Rdtase"/>
</dbReference>
<dbReference type="NCBIfam" id="TIGR01035">
    <property type="entry name" value="hemA"/>
    <property type="match status" value="1"/>
</dbReference>
<dbReference type="NCBIfam" id="NF000744">
    <property type="entry name" value="PRK00045.1-3"/>
    <property type="match status" value="1"/>
</dbReference>
<dbReference type="PANTHER" id="PTHR43120">
    <property type="entry name" value="GLUTAMYL-TRNA REDUCTASE 1, CHLOROPLASTIC"/>
    <property type="match status" value="1"/>
</dbReference>
<dbReference type="PANTHER" id="PTHR43120:SF1">
    <property type="entry name" value="GLUTAMYL-TRNA REDUCTASE 1, CHLOROPLASTIC"/>
    <property type="match status" value="1"/>
</dbReference>
<dbReference type="Pfam" id="PF00745">
    <property type="entry name" value="GlutR_dimer"/>
    <property type="match status" value="1"/>
</dbReference>
<dbReference type="Pfam" id="PF05201">
    <property type="entry name" value="GlutR_N"/>
    <property type="match status" value="1"/>
</dbReference>
<dbReference type="Pfam" id="PF01488">
    <property type="entry name" value="Shikimate_DH"/>
    <property type="match status" value="1"/>
</dbReference>
<dbReference type="PIRSF" id="PIRSF000445">
    <property type="entry name" value="4pyrrol_synth_GluRdtase"/>
    <property type="match status" value="1"/>
</dbReference>
<dbReference type="SUPFAM" id="SSF69742">
    <property type="entry name" value="Glutamyl tRNA-reductase catalytic, N-terminal domain"/>
    <property type="match status" value="1"/>
</dbReference>
<dbReference type="SUPFAM" id="SSF69075">
    <property type="entry name" value="Glutamyl tRNA-reductase dimerization domain"/>
    <property type="match status" value="1"/>
</dbReference>
<dbReference type="SUPFAM" id="SSF51735">
    <property type="entry name" value="NAD(P)-binding Rossmann-fold domains"/>
    <property type="match status" value="1"/>
</dbReference>
<dbReference type="PROSITE" id="PS00747">
    <property type="entry name" value="GLUTR"/>
    <property type="match status" value="1"/>
</dbReference>
<organism>
    <name type="scientific">Trichormus variabilis (strain ATCC 29413 / PCC 7937)</name>
    <name type="common">Anabaena variabilis</name>
    <dbReference type="NCBI Taxonomy" id="240292"/>
    <lineage>
        <taxon>Bacteria</taxon>
        <taxon>Bacillati</taxon>
        <taxon>Cyanobacteriota</taxon>
        <taxon>Cyanophyceae</taxon>
        <taxon>Nostocales</taxon>
        <taxon>Nostocaceae</taxon>
        <taxon>Trichormus</taxon>
    </lineage>
</organism>
<protein>
    <recommendedName>
        <fullName evidence="1">Glutamyl-tRNA reductase</fullName>
        <shortName evidence="1">GluTR</shortName>
        <ecNumber evidence="1">1.2.1.70</ecNumber>
    </recommendedName>
</protein>
<keyword id="KW-0149">Chlorophyll biosynthesis</keyword>
<keyword id="KW-0521">NADP</keyword>
<keyword id="KW-0560">Oxidoreductase</keyword>
<keyword id="KW-0627">Porphyrin biosynthesis</keyword>
<gene>
    <name evidence="1" type="primary">hemA</name>
    <name type="ordered locus">Ava_3699</name>
</gene>
<sequence length="428" mass="47881">MNIAVVGLSHKTAPVEIREKLSIPEPQTESAIAQLTSYPHIDEVAILSTCNRLEIYIVAGETDHGIREVTQFLSEHSKLPVHSLRQHLFVLLHEDAVMHIMRVAAGLDSLVLGEGQILAQVKNTHKLGQQYNGIKTILNRLFKQALTAGKRVRTETSIGTGAVSISSAAVELAQIKAENLAACRVTILGAGKMSRLLVQHLVSKGATQISIVNRSRERAQELAKQFSEHPIRTHLLPEMMTVIAESHLVFTSTSATEPILDRAKLEMVLAPNQPLMLFDISVPRNVHTDVNELANVQAFNVDDLKAVVAQNYESRRKMAQEAERLLEEEIEAFDIWWRSLETVSTISSLRSKIETIREQELEKALSRLGSEFGDKHQEVIEALTRGIVNKILHDPMVQLRAQQDVEARRRCMQTLQMLFNLDVGEQFS</sequence>
<feature type="chain" id="PRO_1000004592" description="Glutamyl-tRNA reductase">
    <location>
        <begin position="1"/>
        <end position="428"/>
    </location>
</feature>
<feature type="active site" description="Nucleophile" evidence="1">
    <location>
        <position position="50"/>
    </location>
</feature>
<feature type="binding site" evidence="1">
    <location>
        <begin position="49"/>
        <end position="52"/>
    </location>
    <ligand>
        <name>substrate</name>
    </ligand>
</feature>
<feature type="binding site" evidence="1">
    <location>
        <position position="109"/>
    </location>
    <ligand>
        <name>substrate</name>
    </ligand>
</feature>
<feature type="binding site" evidence="1">
    <location>
        <begin position="114"/>
        <end position="116"/>
    </location>
    <ligand>
        <name>substrate</name>
    </ligand>
</feature>
<feature type="binding site" evidence="1">
    <location>
        <position position="120"/>
    </location>
    <ligand>
        <name>substrate</name>
    </ligand>
</feature>
<feature type="binding site" evidence="1">
    <location>
        <begin position="189"/>
        <end position="194"/>
    </location>
    <ligand>
        <name>NADP(+)</name>
        <dbReference type="ChEBI" id="CHEBI:58349"/>
    </ligand>
</feature>
<feature type="site" description="Important for activity" evidence="1">
    <location>
        <position position="99"/>
    </location>
</feature>
<evidence type="ECO:0000255" key="1">
    <source>
        <dbReference type="HAMAP-Rule" id="MF_00087"/>
    </source>
</evidence>
<comment type="function">
    <text evidence="1">Catalyzes the NADPH-dependent reduction of glutamyl-tRNA(Glu) to glutamate 1-semialdehyde (GSA).</text>
</comment>
<comment type="catalytic activity">
    <reaction evidence="1">
        <text>(S)-4-amino-5-oxopentanoate + tRNA(Glu) + NADP(+) = L-glutamyl-tRNA(Glu) + NADPH + H(+)</text>
        <dbReference type="Rhea" id="RHEA:12344"/>
        <dbReference type="Rhea" id="RHEA-COMP:9663"/>
        <dbReference type="Rhea" id="RHEA-COMP:9680"/>
        <dbReference type="ChEBI" id="CHEBI:15378"/>
        <dbReference type="ChEBI" id="CHEBI:57501"/>
        <dbReference type="ChEBI" id="CHEBI:57783"/>
        <dbReference type="ChEBI" id="CHEBI:58349"/>
        <dbReference type="ChEBI" id="CHEBI:78442"/>
        <dbReference type="ChEBI" id="CHEBI:78520"/>
        <dbReference type="EC" id="1.2.1.70"/>
    </reaction>
</comment>
<comment type="pathway">
    <text evidence="1">Porphyrin-containing compound metabolism; protoporphyrin-IX biosynthesis; 5-aminolevulinate from L-glutamyl-tRNA(Glu): step 1/2.</text>
</comment>
<comment type="pathway">
    <text evidence="1">Porphyrin-containing compound metabolism; chlorophyll biosynthesis.</text>
</comment>
<comment type="subunit">
    <text evidence="1">Homodimer.</text>
</comment>
<comment type="domain">
    <text evidence="1">Possesses an unusual extended V-shaped dimeric structure with each monomer consisting of three distinct domains arranged along a curved 'spinal' alpha-helix. The N-terminal catalytic domain specifically recognizes the glutamate moiety of the substrate. The second domain is the NADPH-binding domain, and the third C-terminal domain is responsible for dimerization.</text>
</comment>
<comment type="miscellaneous">
    <text evidence="1">During catalysis, the active site Cys acts as a nucleophile attacking the alpha-carbonyl group of tRNA-bound glutamate with the formation of a thioester intermediate between enzyme and glutamate, and the concomitant release of tRNA(Glu). The thioester intermediate is finally reduced by direct hydride transfer from NADPH, to form the product GSA.</text>
</comment>
<comment type="similarity">
    <text evidence="1">Belongs to the glutamyl-tRNA reductase family.</text>
</comment>
<reference key="1">
    <citation type="journal article" date="2014" name="Stand. Genomic Sci.">
        <title>Complete genome sequence of Anabaena variabilis ATCC 29413.</title>
        <authorList>
            <person name="Thiel T."/>
            <person name="Pratte B.S."/>
            <person name="Zhong J."/>
            <person name="Goodwin L."/>
            <person name="Copeland A."/>
            <person name="Lucas S."/>
            <person name="Han C."/>
            <person name="Pitluck S."/>
            <person name="Land M.L."/>
            <person name="Kyrpides N.C."/>
            <person name="Woyke T."/>
        </authorList>
    </citation>
    <scope>NUCLEOTIDE SEQUENCE [LARGE SCALE GENOMIC DNA]</scope>
    <source>
        <strain>ATCC 29413 / PCC 7937</strain>
    </source>
</reference>
<proteinExistence type="inferred from homology"/>
<accession>Q3M6T2</accession>
<name>HEM1_TRIV2</name>